<evidence type="ECO:0000250" key="1"/>
<evidence type="ECO:0000255" key="2">
    <source>
        <dbReference type="HAMAP-Rule" id="MF_00768"/>
    </source>
</evidence>
<protein>
    <recommendedName>
        <fullName evidence="2">HTH-type transcriptional regulator BetI</fullName>
    </recommendedName>
</protein>
<feature type="chain" id="PRO_0000070578" description="HTH-type transcriptional regulator BetI">
    <location>
        <begin position="1"/>
        <end position="198"/>
    </location>
</feature>
<feature type="domain" description="HTH tetR-type" evidence="2">
    <location>
        <begin position="8"/>
        <end position="68"/>
    </location>
</feature>
<feature type="DNA-binding region" description="H-T-H motif" evidence="2">
    <location>
        <begin position="31"/>
        <end position="50"/>
    </location>
</feature>
<sequence>MPKIGMEPLRRRELIDAAIRTIGQRGSLDVTVAQIAHEAGVSPALAHHYFGGKDKLILATMRHLLRELGRDLNAAIKQANTPHERIAAIIAVNFSATQFAQETIAAWLTFYVHAQQSDDIKRLLRIYARRLHSNLVFALEQLTSRARANRIAEGAGAMIDGLYIRHALGADAPDAASAIALVEDYIAIQLSGQPSAEN</sequence>
<accession>Q8YFY3</accession>
<proteinExistence type="inferred from homology"/>
<organism>
    <name type="scientific">Brucella melitensis biotype 1 (strain ATCC 23456 / CCUG 17765 / NCTC 10094 / 16M)</name>
    <dbReference type="NCBI Taxonomy" id="224914"/>
    <lineage>
        <taxon>Bacteria</taxon>
        <taxon>Pseudomonadati</taxon>
        <taxon>Pseudomonadota</taxon>
        <taxon>Alphaproteobacteria</taxon>
        <taxon>Hyphomicrobiales</taxon>
        <taxon>Brucellaceae</taxon>
        <taxon>Brucella/Ochrobactrum group</taxon>
        <taxon>Brucella</taxon>
    </lineage>
</organism>
<reference key="1">
    <citation type="journal article" date="2002" name="Proc. Natl. Acad. Sci. U.S.A.">
        <title>The genome sequence of the facultative intracellular pathogen Brucella melitensis.</title>
        <authorList>
            <person name="DelVecchio V.G."/>
            <person name="Kapatral V."/>
            <person name="Redkar R.J."/>
            <person name="Patra G."/>
            <person name="Mujer C."/>
            <person name="Los T."/>
            <person name="Ivanova N."/>
            <person name="Anderson I."/>
            <person name="Bhattacharyya A."/>
            <person name="Lykidis A."/>
            <person name="Reznik G."/>
            <person name="Jablonski L."/>
            <person name="Larsen N."/>
            <person name="D'Souza M."/>
            <person name="Bernal A."/>
            <person name="Mazur M."/>
            <person name="Goltsman E."/>
            <person name="Selkov E."/>
            <person name="Elzer P.H."/>
            <person name="Hagius S."/>
            <person name="O'Callaghan D."/>
            <person name="Letesson J.-J."/>
            <person name="Haselkorn R."/>
            <person name="Kyrpides N.C."/>
            <person name="Overbeek R."/>
        </authorList>
    </citation>
    <scope>NUCLEOTIDE SEQUENCE [LARGE SCALE GENOMIC DNA]</scope>
    <source>
        <strain>ATCC 23456 / CCUG 17765 / NCTC 10094 / 16M</strain>
    </source>
</reference>
<gene>
    <name evidence="2" type="primary">betI</name>
    <name type="ordered locus">BMEI1379</name>
</gene>
<name>BETI_BRUME</name>
<comment type="function">
    <text evidence="1">Repressor involved in the biosynthesis of the osmoprotectant glycine betaine. It represses transcription of the choline transporter BetT and the genes of BetAB involved in the synthesis of glycine betaine (By similarity).</text>
</comment>
<comment type="pathway">
    <text>Amine and polyamine biosynthesis; betaine biosynthesis via choline pathway [regulation].</text>
</comment>
<keyword id="KW-0238">DNA-binding</keyword>
<keyword id="KW-0678">Repressor</keyword>
<keyword id="KW-0804">Transcription</keyword>
<keyword id="KW-0805">Transcription regulation</keyword>
<dbReference type="EMBL" id="AE008917">
    <property type="protein sequence ID" value="AAL52560.1"/>
    <property type="molecule type" value="Genomic_DNA"/>
</dbReference>
<dbReference type="PIR" id="AE3424">
    <property type="entry name" value="AE3424"/>
</dbReference>
<dbReference type="RefSeq" id="WP_004683258.1">
    <property type="nucleotide sequence ID" value="NZ_GG703778.1"/>
</dbReference>
<dbReference type="SMR" id="Q8YFY3"/>
<dbReference type="GeneID" id="29594234"/>
<dbReference type="KEGG" id="bme:BMEI1379"/>
<dbReference type="KEGG" id="bmel:DK63_23"/>
<dbReference type="PATRIC" id="fig|224914.52.peg.25"/>
<dbReference type="eggNOG" id="COG1309">
    <property type="taxonomic scope" value="Bacteria"/>
</dbReference>
<dbReference type="UniPathway" id="UPA00529"/>
<dbReference type="Proteomes" id="UP000000419">
    <property type="component" value="Chromosome I"/>
</dbReference>
<dbReference type="GO" id="GO:0003700">
    <property type="term" value="F:DNA-binding transcription factor activity"/>
    <property type="evidence" value="ECO:0007669"/>
    <property type="project" value="UniProtKB-UniRule"/>
</dbReference>
<dbReference type="GO" id="GO:0000976">
    <property type="term" value="F:transcription cis-regulatory region binding"/>
    <property type="evidence" value="ECO:0007669"/>
    <property type="project" value="TreeGrafter"/>
</dbReference>
<dbReference type="GO" id="GO:0019285">
    <property type="term" value="P:glycine betaine biosynthetic process from choline"/>
    <property type="evidence" value="ECO:0007669"/>
    <property type="project" value="UniProtKB-UniRule"/>
</dbReference>
<dbReference type="GO" id="GO:0045892">
    <property type="term" value="P:negative regulation of DNA-templated transcription"/>
    <property type="evidence" value="ECO:0007669"/>
    <property type="project" value="UniProtKB-UniRule"/>
</dbReference>
<dbReference type="Gene3D" id="1.10.357.10">
    <property type="entry name" value="Tetracycline Repressor, domain 2"/>
    <property type="match status" value="1"/>
</dbReference>
<dbReference type="HAMAP" id="MF_00768">
    <property type="entry name" value="HTH_type_BetI"/>
    <property type="match status" value="1"/>
</dbReference>
<dbReference type="InterPro" id="IPR039538">
    <property type="entry name" value="BetI_C"/>
</dbReference>
<dbReference type="InterPro" id="IPR023772">
    <property type="entry name" value="DNA-bd_HTH_TetR-type_CS"/>
</dbReference>
<dbReference type="InterPro" id="IPR009057">
    <property type="entry name" value="Homeodomain-like_sf"/>
</dbReference>
<dbReference type="InterPro" id="IPR050109">
    <property type="entry name" value="HTH-type_TetR-like_transc_reg"/>
</dbReference>
<dbReference type="InterPro" id="IPR001647">
    <property type="entry name" value="HTH_TetR"/>
</dbReference>
<dbReference type="InterPro" id="IPR036271">
    <property type="entry name" value="Tet_transcr_reg_TetR-rel_C_sf"/>
</dbReference>
<dbReference type="InterPro" id="IPR017757">
    <property type="entry name" value="Tscrpt_rep_BetI"/>
</dbReference>
<dbReference type="NCBIfam" id="TIGR03384">
    <property type="entry name" value="betaine_BetI"/>
    <property type="match status" value="1"/>
</dbReference>
<dbReference type="NCBIfam" id="NF001978">
    <property type="entry name" value="PRK00767.1"/>
    <property type="match status" value="1"/>
</dbReference>
<dbReference type="PANTHER" id="PTHR30055:SF234">
    <property type="entry name" value="HTH-TYPE TRANSCRIPTIONAL REGULATOR BETI"/>
    <property type="match status" value="1"/>
</dbReference>
<dbReference type="PANTHER" id="PTHR30055">
    <property type="entry name" value="HTH-TYPE TRANSCRIPTIONAL REGULATOR RUTR"/>
    <property type="match status" value="1"/>
</dbReference>
<dbReference type="Pfam" id="PF13977">
    <property type="entry name" value="TetR_C_6"/>
    <property type="match status" value="1"/>
</dbReference>
<dbReference type="Pfam" id="PF00440">
    <property type="entry name" value="TetR_N"/>
    <property type="match status" value="1"/>
</dbReference>
<dbReference type="PRINTS" id="PR00455">
    <property type="entry name" value="HTHTETR"/>
</dbReference>
<dbReference type="SUPFAM" id="SSF46689">
    <property type="entry name" value="Homeodomain-like"/>
    <property type="match status" value="1"/>
</dbReference>
<dbReference type="SUPFAM" id="SSF48498">
    <property type="entry name" value="Tetracyclin repressor-like, C-terminal domain"/>
    <property type="match status" value="1"/>
</dbReference>
<dbReference type="PROSITE" id="PS01081">
    <property type="entry name" value="HTH_TETR_1"/>
    <property type="match status" value="1"/>
</dbReference>
<dbReference type="PROSITE" id="PS50977">
    <property type="entry name" value="HTH_TETR_2"/>
    <property type="match status" value="1"/>
</dbReference>